<protein>
    <recommendedName>
        <fullName>Cathepsin O</fullName>
        <ecNumber>3.4.22.42</ecNumber>
    </recommendedName>
</protein>
<feature type="signal peptide" evidence="2">
    <location>
        <begin position="1"/>
        <end position="23"/>
    </location>
</feature>
<feature type="propeptide" id="PRO_0000026323" description="Activation peptide">
    <location>
        <begin position="24"/>
        <end position="98"/>
    </location>
</feature>
<feature type="chain" id="PRO_0000026324" description="Cathepsin O">
    <location>
        <begin position="99"/>
        <end position="312"/>
    </location>
</feature>
<feature type="active site" evidence="1">
    <location>
        <position position="123"/>
    </location>
</feature>
<feature type="active site" evidence="1">
    <location>
        <position position="260"/>
    </location>
</feature>
<feature type="active site" evidence="1">
    <location>
        <position position="280"/>
    </location>
</feature>
<feature type="glycosylation site" description="N-linked (GlcNAc...) asparagine" evidence="2">
    <location>
        <position position="53"/>
    </location>
</feature>
<feature type="glycosylation site" description="N-linked (GlcNAc...) asparagine" evidence="2">
    <location>
        <position position="96"/>
    </location>
</feature>
<feature type="disulfide bond" evidence="1">
    <location>
        <begin position="120"/>
        <end position="161"/>
    </location>
</feature>
<feature type="disulfide bond" evidence="1">
    <location>
        <begin position="154"/>
        <end position="195"/>
    </location>
</feature>
<feature type="disulfide bond" evidence="1">
    <location>
        <begin position="253"/>
        <end position="301"/>
    </location>
</feature>
<feature type="sequence conflict" description="In Ref. 1; BAC33765." evidence="5" ref="1">
    <original>F</original>
    <variation>L</variation>
    <location>
        <position position="63"/>
    </location>
</feature>
<comment type="function">
    <text evidence="1">Proteolytic enzyme possibly involved in normal cellular protein degradation and turnover.</text>
</comment>
<comment type="catalytic activity">
    <reaction>
        <text>The recombinant human enzyme hydrolyzes synthetic endopeptidase substrates including Z-Phe-Arg-NHMec and Z-Arg-Arg-NHMec.</text>
        <dbReference type="EC" id="3.4.22.42"/>
    </reaction>
</comment>
<comment type="subcellular location">
    <subcellularLocation>
        <location evidence="1">Lysosome</location>
    </subcellularLocation>
</comment>
<comment type="similarity">
    <text evidence="3 4">Belongs to the peptidase C1 family.</text>
</comment>
<name>CATO_MOUSE</name>
<organism>
    <name type="scientific">Mus musculus</name>
    <name type="common">Mouse</name>
    <dbReference type="NCBI Taxonomy" id="10090"/>
    <lineage>
        <taxon>Eukaryota</taxon>
        <taxon>Metazoa</taxon>
        <taxon>Chordata</taxon>
        <taxon>Craniata</taxon>
        <taxon>Vertebrata</taxon>
        <taxon>Euteleostomi</taxon>
        <taxon>Mammalia</taxon>
        <taxon>Eutheria</taxon>
        <taxon>Euarchontoglires</taxon>
        <taxon>Glires</taxon>
        <taxon>Rodentia</taxon>
        <taxon>Myomorpha</taxon>
        <taxon>Muroidea</taxon>
        <taxon>Muridae</taxon>
        <taxon>Murinae</taxon>
        <taxon>Mus</taxon>
        <taxon>Mus</taxon>
    </lineage>
</organism>
<proteinExistence type="evidence at transcript level"/>
<gene>
    <name type="primary">Ctso</name>
</gene>
<reference key="1">
    <citation type="journal article" date="2005" name="Science">
        <title>The transcriptional landscape of the mammalian genome.</title>
        <authorList>
            <person name="Carninci P."/>
            <person name="Kasukawa T."/>
            <person name="Katayama S."/>
            <person name="Gough J."/>
            <person name="Frith M.C."/>
            <person name="Maeda N."/>
            <person name="Oyama R."/>
            <person name="Ravasi T."/>
            <person name="Lenhard B."/>
            <person name="Wells C."/>
            <person name="Kodzius R."/>
            <person name="Shimokawa K."/>
            <person name="Bajic V.B."/>
            <person name="Brenner S.E."/>
            <person name="Batalov S."/>
            <person name="Forrest A.R."/>
            <person name="Zavolan M."/>
            <person name="Davis M.J."/>
            <person name="Wilming L.G."/>
            <person name="Aidinis V."/>
            <person name="Allen J.E."/>
            <person name="Ambesi-Impiombato A."/>
            <person name="Apweiler R."/>
            <person name="Aturaliya R.N."/>
            <person name="Bailey T.L."/>
            <person name="Bansal M."/>
            <person name="Baxter L."/>
            <person name="Beisel K.W."/>
            <person name="Bersano T."/>
            <person name="Bono H."/>
            <person name="Chalk A.M."/>
            <person name="Chiu K.P."/>
            <person name="Choudhary V."/>
            <person name="Christoffels A."/>
            <person name="Clutterbuck D.R."/>
            <person name="Crowe M.L."/>
            <person name="Dalla E."/>
            <person name="Dalrymple B.P."/>
            <person name="de Bono B."/>
            <person name="Della Gatta G."/>
            <person name="di Bernardo D."/>
            <person name="Down T."/>
            <person name="Engstrom P."/>
            <person name="Fagiolini M."/>
            <person name="Faulkner G."/>
            <person name="Fletcher C.F."/>
            <person name="Fukushima T."/>
            <person name="Furuno M."/>
            <person name="Futaki S."/>
            <person name="Gariboldi M."/>
            <person name="Georgii-Hemming P."/>
            <person name="Gingeras T.R."/>
            <person name="Gojobori T."/>
            <person name="Green R.E."/>
            <person name="Gustincich S."/>
            <person name="Harbers M."/>
            <person name="Hayashi Y."/>
            <person name="Hensch T.K."/>
            <person name="Hirokawa N."/>
            <person name="Hill D."/>
            <person name="Huminiecki L."/>
            <person name="Iacono M."/>
            <person name="Ikeo K."/>
            <person name="Iwama A."/>
            <person name="Ishikawa T."/>
            <person name="Jakt M."/>
            <person name="Kanapin A."/>
            <person name="Katoh M."/>
            <person name="Kawasawa Y."/>
            <person name="Kelso J."/>
            <person name="Kitamura H."/>
            <person name="Kitano H."/>
            <person name="Kollias G."/>
            <person name="Krishnan S.P."/>
            <person name="Kruger A."/>
            <person name="Kummerfeld S.K."/>
            <person name="Kurochkin I.V."/>
            <person name="Lareau L.F."/>
            <person name="Lazarevic D."/>
            <person name="Lipovich L."/>
            <person name="Liu J."/>
            <person name="Liuni S."/>
            <person name="McWilliam S."/>
            <person name="Madan Babu M."/>
            <person name="Madera M."/>
            <person name="Marchionni L."/>
            <person name="Matsuda H."/>
            <person name="Matsuzawa S."/>
            <person name="Miki H."/>
            <person name="Mignone F."/>
            <person name="Miyake S."/>
            <person name="Morris K."/>
            <person name="Mottagui-Tabar S."/>
            <person name="Mulder N."/>
            <person name="Nakano N."/>
            <person name="Nakauchi H."/>
            <person name="Ng P."/>
            <person name="Nilsson R."/>
            <person name="Nishiguchi S."/>
            <person name="Nishikawa S."/>
            <person name="Nori F."/>
            <person name="Ohara O."/>
            <person name="Okazaki Y."/>
            <person name="Orlando V."/>
            <person name="Pang K.C."/>
            <person name="Pavan W.J."/>
            <person name="Pavesi G."/>
            <person name="Pesole G."/>
            <person name="Petrovsky N."/>
            <person name="Piazza S."/>
            <person name="Reed J."/>
            <person name="Reid J.F."/>
            <person name="Ring B.Z."/>
            <person name="Ringwald M."/>
            <person name="Rost B."/>
            <person name="Ruan Y."/>
            <person name="Salzberg S.L."/>
            <person name="Sandelin A."/>
            <person name="Schneider C."/>
            <person name="Schoenbach C."/>
            <person name="Sekiguchi K."/>
            <person name="Semple C.A."/>
            <person name="Seno S."/>
            <person name="Sessa L."/>
            <person name="Sheng Y."/>
            <person name="Shibata Y."/>
            <person name="Shimada H."/>
            <person name="Shimada K."/>
            <person name="Silva D."/>
            <person name="Sinclair B."/>
            <person name="Sperling S."/>
            <person name="Stupka E."/>
            <person name="Sugiura K."/>
            <person name="Sultana R."/>
            <person name="Takenaka Y."/>
            <person name="Taki K."/>
            <person name="Tammoja K."/>
            <person name="Tan S.L."/>
            <person name="Tang S."/>
            <person name="Taylor M.S."/>
            <person name="Tegner J."/>
            <person name="Teichmann S.A."/>
            <person name="Ueda H.R."/>
            <person name="van Nimwegen E."/>
            <person name="Verardo R."/>
            <person name="Wei C.L."/>
            <person name="Yagi K."/>
            <person name="Yamanishi H."/>
            <person name="Zabarovsky E."/>
            <person name="Zhu S."/>
            <person name="Zimmer A."/>
            <person name="Hide W."/>
            <person name="Bult C."/>
            <person name="Grimmond S.M."/>
            <person name="Teasdale R.D."/>
            <person name="Liu E.T."/>
            <person name="Brusic V."/>
            <person name="Quackenbush J."/>
            <person name="Wahlestedt C."/>
            <person name="Mattick J.S."/>
            <person name="Hume D.A."/>
            <person name="Kai C."/>
            <person name="Sasaki D."/>
            <person name="Tomaru Y."/>
            <person name="Fukuda S."/>
            <person name="Kanamori-Katayama M."/>
            <person name="Suzuki M."/>
            <person name="Aoki J."/>
            <person name="Arakawa T."/>
            <person name="Iida J."/>
            <person name="Imamura K."/>
            <person name="Itoh M."/>
            <person name="Kato T."/>
            <person name="Kawaji H."/>
            <person name="Kawagashira N."/>
            <person name="Kawashima T."/>
            <person name="Kojima M."/>
            <person name="Kondo S."/>
            <person name="Konno H."/>
            <person name="Nakano K."/>
            <person name="Ninomiya N."/>
            <person name="Nishio T."/>
            <person name="Okada M."/>
            <person name="Plessy C."/>
            <person name="Shibata K."/>
            <person name="Shiraki T."/>
            <person name="Suzuki S."/>
            <person name="Tagami M."/>
            <person name="Waki K."/>
            <person name="Watahiki A."/>
            <person name="Okamura-Oho Y."/>
            <person name="Suzuki H."/>
            <person name="Kawai J."/>
            <person name="Hayashizaki Y."/>
        </authorList>
    </citation>
    <scope>NUCLEOTIDE SEQUENCE [LARGE SCALE MRNA]</scope>
    <source>
        <strain>C57BL/6J</strain>
        <tissue>Diencephalon</tissue>
        <tissue>Embryo</tissue>
        <tissue>Lung</tissue>
    </source>
</reference>
<reference key="2">
    <citation type="journal article" date="2004" name="Genome Res.">
        <title>The status, quality, and expansion of the NIH full-length cDNA project: the Mammalian Gene Collection (MGC).</title>
        <authorList>
            <consortium name="The MGC Project Team"/>
        </authorList>
    </citation>
    <scope>NUCLEOTIDE SEQUENCE [LARGE SCALE MRNA] OF 21-312</scope>
    <source>
        <strain>FVB/N</strain>
        <tissue>Mammary gland</tissue>
    </source>
</reference>
<dbReference type="EC" id="3.4.22.42"/>
<dbReference type="EMBL" id="AK034490">
    <property type="protein sequence ID" value="BAC28728.1"/>
    <property type="molecule type" value="mRNA"/>
</dbReference>
<dbReference type="EMBL" id="AK049470">
    <property type="protein sequence ID" value="BAC33765.1"/>
    <property type="molecule type" value="mRNA"/>
</dbReference>
<dbReference type="EMBL" id="AK165930">
    <property type="protein sequence ID" value="BAE38466.1"/>
    <property type="molecule type" value="mRNA"/>
</dbReference>
<dbReference type="EMBL" id="AK166103">
    <property type="protein sequence ID" value="BAE38573.1"/>
    <property type="molecule type" value="mRNA"/>
</dbReference>
<dbReference type="EMBL" id="BC044664">
    <property type="protein sequence ID" value="AAH44664.1"/>
    <property type="molecule type" value="mRNA"/>
</dbReference>
<dbReference type="CCDS" id="CCDS17426.1"/>
<dbReference type="RefSeq" id="NP_808330.1">
    <property type="nucleotide sequence ID" value="NM_177662.3"/>
</dbReference>
<dbReference type="SMR" id="Q8BM88"/>
<dbReference type="FunCoup" id="Q8BM88">
    <property type="interactions" value="190"/>
</dbReference>
<dbReference type="STRING" id="10090.ENSMUSP00000029649"/>
<dbReference type="MEROPS" id="C01.035"/>
<dbReference type="GlyCosmos" id="Q8BM88">
    <property type="glycosylation" value="2 sites, No reported glycans"/>
</dbReference>
<dbReference type="GlyGen" id="Q8BM88">
    <property type="glycosylation" value="3 sites, 2 N-linked glycans (2 sites)"/>
</dbReference>
<dbReference type="iPTMnet" id="Q8BM88"/>
<dbReference type="PhosphoSitePlus" id="Q8BM88"/>
<dbReference type="PaxDb" id="10090-ENSMUSP00000029649"/>
<dbReference type="ProteomicsDB" id="265447"/>
<dbReference type="Antibodypedia" id="48148">
    <property type="antibodies" value="134 antibodies from 26 providers"/>
</dbReference>
<dbReference type="DNASU" id="229445"/>
<dbReference type="Ensembl" id="ENSMUST00000029649.3">
    <property type="protein sequence ID" value="ENSMUSP00000029649.3"/>
    <property type="gene ID" value="ENSMUSG00000028015.4"/>
</dbReference>
<dbReference type="GeneID" id="229445"/>
<dbReference type="KEGG" id="mmu:229445"/>
<dbReference type="UCSC" id="uc008pon.1">
    <property type="organism name" value="mouse"/>
</dbReference>
<dbReference type="AGR" id="MGI:2139628"/>
<dbReference type="CTD" id="1519"/>
<dbReference type="MGI" id="MGI:2139628">
    <property type="gene designation" value="Ctso"/>
</dbReference>
<dbReference type="VEuPathDB" id="HostDB:ENSMUSG00000028015"/>
<dbReference type="eggNOG" id="KOG1542">
    <property type="taxonomic scope" value="Eukaryota"/>
</dbReference>
<dbReference type="GeneTree" id="ENSGT00940000159253"/>
<dbReference type="HOGENOM" id="CLU_012184_1_3_1"/>
<dbReference type="InParanoid" id="Q8BM88"/>
<dbReference type="OMA" id="QNGLCRY"/>
<dbReference type="OrthoDB" id="498368at2759"/>
<dbReference type="PhylomeDB" id="Q8BM88"/>
<dbReference type="TreeFam" id="TF331594"/>
<dbReference type="Reactome" id="R-MMU-2132295">
    <property type="pathway name" value="MHC class II antigen presentation"/>
</dbReference>
<dbReference type="BioGRID-ORCS" id="229445">
    <property type="hits" value="2 hits in 76 CRISPR screens"/>
</dbReference>
<dbReference type="ChiTaRS" id="Ctso">
    <property type="organism name" value="mouse"/>
</dbReference>
<dbReference type="PRO" id="PR:Q8BM88"/>
<dbReference type="Proteomes" id="UP000000589">
    <property type="component" value="Chromosome 3"/>
</dbReference>
<dbReference type="RNAct" id="Q8BM88">
    <property type="molecule type" value="protein"/>
</dbReference>
<dbReference type="Bgee" id="ENSMUSG00000028015">
    <property type="expression patterns" value="Expressed in gastrula and 218 other cell types or tissues"/>
</dbReference>
<dbReference type="GO" id="GO:0005764">
    <property type="term" value="C:lysosome"/>
    <property type="evidence" value="ECO:0007669"/>
    <property type="project" value="UniProtKB-SubCell"/>
</dbReference>
<dbReference type="GO" id="GO:0008234">
    <property type="term" value="F:cysteine-type peptidase activity"/>
    <property type="evidence" value="ECO:0007669"/>
    <property type="project" value="UniProtKB-KW"/>
</dbReference>
<dbReference type="GO" id="GO:0006508">
    <property type="term" value="P:proteolysis"/>
    <property type="evidence" value="ECO:0007669"/>
    <property type="project" value="UniProtKB-KW"/>
</dbReference>
<dbReference type="CDD" id="cd02248">
    <property type="entry name" value="Peptidase_C1A"/>
    <property type="match status" value="1"/>
</dbReference>
<dbReference type="FunFam" id="3.90.70.10:FF:000079">
    <property type="entry name" value="Cathepsin O"/>
    <property type="match status" value="1"/>
</dbReference>
<dbReference type="Gene3D" id="3.90.70.10">
    <property type="entry name" value="Cysteine proteinases"/>
    <property type="match status" value="1"/>
</dbReference>
<dbReference type="InterPro" id="IPR038765">
    <property type="entry name" value="Papain-like_cys_pep_sf"/>
</dbReference>
<dbReference type="InterPro" id="IPR000169">
    <property type="entry name" value="Pept_cys_AS"/>
</dbReference>
<dbReference type="InterPro" id="IPR025660">
    <property type="entry name" value="Pept_his_AS"/>
</dbReference>
<dbReference type="InterPro" id="IPR013128">
    <property type="entry name" value="Peptidase_C1A"/>
</dbReference>
<dbReference type="InterPro" id="IPR000668">
    <property type="entry name" value="Peptidase_C1A_C"/>
</dbReference>
<dbReference type="InterPro" id="IPR039417">
    <property type="entry name" value="Peptidase_C1A_papain-like"/>
</dbReference>
<dbReference type="PANTHER" id="PTHR12411">
    <property type="entry name" value="CYSTEINE PROTEASE FAMILY C1-RELATED"/>
    <property type="match status" value="1"/>
</dbReference>
<dbReference type="Pfam" id="PF00112">
    <property type="entry name" value="Peptidase_C1"/>
    <property type="match status" value="1"/>
</dbReference>
<dbReference type="PRINTS" id="PR00705">
    <property type="entry name" value="PAPAIN"/>
</dbReference>
<dbReference type="SMART" id="SM00645">
    <property type="entry name" value="Pept_C1"/>
    <property type="match status" value="1"/>
</dbReference>
<dbReference type="SUPFAM" id="SSF54001">
    <property type="entry name" value="Cysteine proteinases"/>
    <property type="match status" value="1"/>
</dbReference>
<dbReference type="PROSITE" id="PS00139">
    <property type="entry name" value="THIOL_PROTEASE_CYS"/>
    <property type="match status" value="1"/>
</dbReference>
<dbReference type="PROSITE" id="PS00639">
    <property type="entry name" value="THIOL_PROTEASE_HIS"/>
    <property type="match status" value="1"/>
</dbReference>
<keyword id="KW-1015">Disulfide bond</keyword>
<keyword id="KW-0325">Glycoprotein</keyword>
<keyword id="KW-0378">Hydrolase</keyword>
<keyword id="KW-0458">Lysosome</keyword>
<keyword id="KW-0645">Protease</keyword>
<keyword id="KW-1185">Reference proteome</keyword>
<keyword id="KW-0732">Signal</keyword>
<keyword id="KW-0788">Thiol protease</keyword>
<keyword id="KW-0865">Zymogen</keyword>
<evidence type="ECO:0000250" key="1"/>
<evidence type="ECO:0000255" key="2"/>
<evidence type="ECO:0000255" key="3">
    <source>
        <dbReference type="PROSITE-ProRule" id="PRU10088"/>
    </source>
</evidence>
<evidence type="ECO:0000255" key="4">
    <source>
        <dbReference type="PROSITE-ProRule" id="PRU10089"/>
    </source>
</evidence>
<evidence type="ECO:0000305" key="5"/>
<sequence length="312" mass="34723">MKPQLVNLLLLCCCCLGRHGVAGTWSWSHQREAAALRESLHRHRYLNSFPHENSTAFYGVNQFSYLFPEEFKALYLGSKYAWAPRYPAEGQRPIPNVSLPLRFDWRDKHVVNPVRNQEMCGGCWAFSVVSAIESARAIQGKSLDYLSVQQVIDCSFNNSGCLGGSPLCALRWLNETQLKLVADSQYPFKAVNGQCRHFPQSQAGVSVKDFSAYNFRGQEDEMARALLSFGPLVVIVDAMSWQDYLGGIIQHHCSSGEANHAVLITGFDRTGNTPYWMVRNSWGSSWGVEGYAHVKMGGNVCGIADSVAAVFV</sequence>
<accession>Q8BM88</accession>
<accession>Q3TM69</accession>
<accession>Q80V35</accession>
<accession>Q8BKX0</accession>